<reference key="1">
    <citation type="journal article" date="1987" name="Biochim. Biophys. Acta">
        <title>The structure of a human neurofilament gene (NF-L): a unique exon-intron organization in the intermediate filament gene family.</title>
        <authorList>
            <person name="Julien J.-P."/>
            <person name="Grosveld F."/>
            <person name="Yazdanbaksh K."/>
            <person name="Flavell D."/>
            <person name="Meijer D."/>
            <person name="Mushynski W."/>
        </authorList>
    </citation>
    <scope>NUCLEOTIDE SEQUENCE [GENOMIC DNA]</scope>
</reference>
<reference key="2">
    <citation type="journal article" date="2002" name="J. Cell Sci.">
        <title>Effects of Charcot-Marie-Tooth-linked mutations of the neurofilament light subunit on intermediate filament formation.</title>
        <authorList>
            <person name="Perez-Olle R."/>
            <person name="Leung C.L."/>
            <person name="Liem R.K."/>
        </authorList>
    </citation>
    <scope>NUCLEOTIDE SEQUENCE [MRNA]</scope>
</reference>
<reference key="3">
    <citation type="journal article" date="2006" name="Nature">
        <title>DNA sequence and analysis of human chromosome 8.</title>
        <authorList>
            <person name="Nusbaum C."/>
            <person name="Mikkelsen T.S."/>
            <person name="Zody M.C."/>
            <person name="Asakawa S."/>
            <person name="Taudien S."/>
            <person name="Garber M."/>
            <person name="Kodira C.D."/>
            <person name="Schueler M.G."/>
            <person name="Shimizu A."/>
            <person name="Whittaker C.A."/>
            <person name="Chang J.L."/>
            <person name="Cuomo C.A."/>
            <person name="Dewar K."/>
            <person name="FitzGerald M.G."/>
            <person name="Yang X."/>
            <person name="Allen N.R."/>
            <person name="Anderson S."/>
            <person name="Asakawa T."/>
            <person name="Blechschmidt K."/>
            <person name="Bloom T."/>
            <person name="Borowsky M.L."/>
            <person name="Butler J."/>
            <person name="Cook A."/>
            <person name="Corum B."/>
            <person name="DeArellano K."/>
            <person name="DeCaprio D."/>
            <person name="Dooley K.T."/>
            <person name="Dorris L. III"/>
            <person name="Engels R."/>
            <person name="Gloeckner G."/>
            <person name="Hafez N."/>
            <person name="Hagopian D.S."/>
            <person name="Hall J.L."/>
            <person name="Ishikawa S.K."/>
            <person name="Jaffe D.B."/>
            <person name="Kamat A."/>
            <person name="Kudoh J."/>
            <person name="Lehmann R."/>
            <person name="Lokitsang T."/>
            <person name="Macdonald P."/>
            <person name="Major J.E."/>
            <person name="Matthews C.D."/>
            <person name="Mauceli E."/>
            <person name="Menzel U."/>
            <person name="Mihalev A.H."/>
            <person name="Minoshima S."/>
            <person name="Murayama Y."/>
            <person name="Naylor J.W."/>
            <person name="Nicol R."/>
            <person name="Nguyen C."/>
            <person name="O'Leary S.B."/>
            <person name="O'Neill K."/>
            <person name="Parker S.C.J."/>
            <person name="Polley A."/>
            <person name="Raymond C.K."/>
            <person name="Reichwald K."/>
            <person name="Rodriguez J."/>
            <person name="Sasaki T."/>
            <person name="Schilhabel M."/>
            <person name="Siddiqui R."/>
            <person name="Smith C.L."/>
            <person name="Sneddon T.P."/>
            <person name="Talamas J.A."/>
            <person name="Tenzin P."/>
            <person name="Topham K."/>
            <person name="Venkataraman V."/>
            <person name="Wen G."/>
            <person name="Yamazaki S."/>
            <person name="Young S.K."/>
            <person name="Zeng Q."/>
            <person name="Zimmer A.R."/>
            <person name="Rosenthal A."/>
            <person name="Birren B.W."/>
            <person name="Platzer M."/>
            <person name="Shimizu N."/>
            <person name="Lander E.S."/>
        </authorList>
    </citation>
    <scope>NUCLEOTIDE SEQUENCE [LARGE SCALE GENOMIC DNA]</scope>
</reference>
<reference key="4">
    <citation type="submission" date="2005-07" db="EMBL/GenBank/DDBJ databases">
        <authorList>
            <person name="Mural R.J."/>
            <person name="Istrail S."/>
            <person name="Sutton G.G."/>
            <person name="Florea L."/>
            <person name="Halpern A.L."/>
            <person name="Mobarry C.M."/>
            <person name="Lippert R."/>
            <person name="Walenz B."/>
            <person name="Shatkay H."/>
            <person name="Dew I."/>
            <person name="Miller J.R."/>
            <person name="Flanigan M.J."/>
            <person name="Edwards N.J."/>
            <person name="Bolanos R."/>
            <person name="Fasulo D."/>
            <person name="Halldorsson B.V."/>
            <person name="Hannenhalli S."/>
            <person name="Turner R."/>
            <person name="Yooseph S."/>
            <person name="Lu F."/>
            <person name="Nusskern D.R."/>
            <person name="Shue B.C."/>
            <person name="Zheng X.H."/>
            <person name="Zhong F."/>
            <person name="Delcher A.L."/>
            <person name="Huson D.H."/>
            <person name="Kravitz S.A."/>
            <person name="Mouchard L."/>
            <person name="Reinert K."/>
            <person name="Remington K.A."/>
            <person name="Clark A.G."/>
            <person name="Waterman M.S."/>
            <person name="Eichler E.E."/>
            <person name="Adams M.D."/>
            <person name="Hunkapiller M.W."/>
            <person name="Myers E.W."/>
            <person name="Venter J.C."/>
        </authorList>
    </citation>
    <scope>NUCLEOTIDE SEQUENCE [LARGE SCALE GENOMIC DNA]</scope>
</reference>
<reference key="5">
    <citation type="journal article" date="2004" name="Genome Res.">
        <title>The status, quality, and expansion of the NIH full-length cDNA project: the Mammalian Gene Collection (MGC).</title>
        <authorList>
            <consortium name="The MGC Project Team"/>
        </authorList>
    </citation>
    <scope>NUCLEOTIDE SEQUENCE [LARGE SCALE MRNA]</scope>
    <source>
        <tissue>Brain</tissue>
    </source>
</reference>
<reference key="6">
    <citation type="journal article" date="1994" name="Cell Growth Differ.">
        <title>AP-1 and Krox-24 transcription factors activate the neurofilament light gene promoter in P19 embryonal carcinoma cells.</title>
        <authorList>
            <person name="Pospelov V.A."/>
            <person name="Pospelova T.V."/>
            <person name="Julien J.-P."/>
        </authorList>
    </citation>
    <scope>NUCLEOTIDE SEQUENCE [GENOMIC DNA] OF 1-11</scope>
</reference>
<reference key="7">
    <citation type="submission" date="2008-12" db="UniProtKB">
        <authorList>
            <person name="Lubec G."/>
            <person name="Chen W.-Q."/>
            <person name="Sun Y."/>
        </authorList>
    </citation>
    <scope>PROTEIN SEQUENCE OF 38-54; 213-224; 340-353; 380-390 AND 422-437</scope>
    <scope>IDENTIFICATION BY MASS SPECTROMETRY</scope>
    <source>
        <tissue>Fetal brain cortex</tissue>
    </source>
</reference>
<reference key="8">
    <citation type="journal article" date="1983" name="J. Biochem.">
        <title>Highly acidic proteins from human brain: purification and properties of Glu-50 protein.</title>
        <authorList>
            <person name="Nomata Y."/>
            <person name="Watanabe T."/>
            <person name="Wada H."/>
        </authorList>
    </citation>
    <scope>PROTEIN SEQUENCE OF 468-473</scope>
    <source>
        <tissue>Brain</tissue>
    </source>
</reference>
<reference key="9">
    <citation type="journal article" date="1996" name="J. Biol. Chem.">
        <title>PKN associates and phosphorylates the head-rod domain of neurofilament protein.</title>
        <authorList>
            <person name="Mukai H."/>
            <person name="Toshimori M."/>
            <person name="Shibata H."/>
            <person name="Kitagawa M."/>
            <person name="Shimakawa M."/>
            <person name="Miyahara M."/>
            <person name="Sunakawa H."/>
            <person name="Ono Y."/>
        </authorList>
    </citation>
    <scope>PHOSPHORYLATION BY PKN1</scope>
</reference>
<reference key="10">
    <citation type="journal article" date="2011" name="BMC Syst. Biol.">
        <title>Initial characterization of the human central proteome.</title>
        <authorList>
            <person name="Burkard T.R."/>
            <person name="Planyavsky M."/>
            <person name="Kaupe I."/>
            <person name="Breitwieser F.P."/>
            <person name="Buerckstuemmer T."/>
            <person name="Bennett K.L."/>
            <person name="Superti-Furga G."/>
            <person name="Colinge J."/>
        </authorList>
    </citation>
    <scope>IDENTIFICATION BY MASS SPECTROMETRY [LARGE SCALE ANALYSIS]</scope>
</reference>
<reference key="11">
    <citation type="journal article" date="2012" name="Mol. Cell. Proteomics">
        <title>Comparative large-scale characterisation of plant vs. mammal proteins reveals similar and idiosyncratic N-alpha acetylation features.</title>
        <authorList>
            <person name="Bienvenut W.V."/>
            <person name="Sumpton D."/>
            <person name="Martinez A."/>
            <person name="Lilla S."/>
            <person name="Espagne C."/>
            <person name="Meinnel T."/>
            <person name="Giglione C."/>
        </authorList>
    </citation>
    <scope>ACETYLATION [LARGE SCALE ANALYSIS] AT SER-2</scope>
    <scope>CLEAVAGE OF INITIATOR METHIONINE [LARGE SCALE ANALYSIS]</scope>
    <scope>IDENTIFICATION BY MASS SPECTROMETRY [LARGE SCALE ANALYSIS]</scope>
</reference>
<reference key="12">
    <citation type="journal article" date="2000" name="Am. J. Hum. Genet.">
        <title>A new variant of Charcot-Marie-Tooth disease type 2 is probably the result of a mutation in the neurofilament-light gene.</title>
        <authorList>
            <person name="Mersiyanova I.V."/>
            <person name="Perepelov A.V."/>
            <person name="Polyakov A.V."/>
            <person name="Sitnikov V.F."/>
            <person name="Dadali E.L."/>
            <person name="Oparin R.B."/>
            <person name="Petrin A.N."/>
            <person name="Evgrafov O.V."/>
        </authorList>
    </citation>
    <scope>VARIANT CMT2E PRO-332</scope>
</reference>
<reference key="13">
    <citation type="journal article" date="2001" name="Ann. Neurol.">
        <title>Further evidence that neurofilament light chain gene mutations can cause Charcot-Marie-Tooth disease type 2E.</title>
        <authorList>
            <person name="De Jonghe P."/>
            <person name="Mersivanova I."/>
            <person name="Nelis E."/>
            <person name="Del Favero J."/>
            <person name="Martin J.-J."/>
            <person name="Van Broeckhoven C."/>
            <person name="Evgrafov O."/>
            <person name="Timmerman V."/>
        </authorList>
    </citation>
    <scope>VARIANT CMT2E ARG-8</scope>
</reference>
<reference key="14">
    <citation type="journal article" date="2002" name="Neurogenetics">
        <title>A novel NF-L mutation Pro22Ser is associated with CMT2 in a large Slovenian family.</title>
        <authorList>
            <person name="Georgiou D.-M."/>
            <person name="Zidar J."/>
            <person name="Korosec M."/>
            <person name="Middleton L.T."/>
            <person name="Kyriakides T."/>
            <person name="Christodoulou K."/>
        </authorList>
    </citation>
    <scope>VARIANT CMT2E SER-22</scope>
</reference>
<reference key="15">
    <citation type="journal article" date="2003" name="Brain">
        <title>Mutations in the neurofilament light chain gene (NEFL) cause early onset severe Charcot-Marie-Tooth disease.</title>
        <authorList>
            <person name="Jordanova A."/>
            <person name="De Jonghe P."/>
            <person name="Boerkoel C.F."/>
            <person name="Takashima H."/>
            <person name="De Vriendt E."/>
            <person name="Ceuterick C."/>
            <person name="Martin J.-J."/>
            <person name="Butler I.J."/>
            <person name="Mancias P."/>
            <person name="Papasozomenos S.C."/>
            <person name="Terespolsky D."/>
            <person name="Potocki L."/>
            <person name="Brown C.W."/>
            <person name="Shy M."/>
            <person name="Rita D.A."/>
            <person name="Tournev I."/>
            <person name="Kremensky I."/>
            <person name="Lupski J.R."/>
            <person name="Timmerman V."/>
        </authorList>
    </citation>
    <scope>VARIANTS CMT1F ARG-8; LEU-8; GLN-8; LYS-90; SER-98 AND GLU-527 DEL</scope>
    <scope>VARIANTS LYS-7 AND ASN-468</scope>
</reference>
<reference key="16">
    <citation type="journal article" date="2004" name="Hum. Mutat.">
        <title>Mutational analysis of PMP22, MPZ, GJB1, EGR2 and NEFL in Korean Charcot-Marie-Tooth neuropathy patients.</title>
        <authorList>
            <person name="Choi B.-O."/>
            <person name="Lee M.S."/>
            <person name="Shin S.H."/>
            <person name="Hwang J.H."/>
            <person name="Choi K.-G."/>
            <person name="Kim W.-K."/>
            <person name="Sunwoo I.N."/>
            <person name="Kim N.K."/>
            <person name="Chung K.W."/>
        </authorList>
    </citation>
    <scope>VARIANT CMT2E PRO-336</scope>
    <scope>VARIANT CMT1F LYS-396</scope>
</reference>
<reference key="17">
    <citation type="journal article" date="2004" name="Neuromuscul. Disord.">
        <title>The novel neurofilament light (NEFL) mutation Glu397Lys is associated with a clinically and morphologically heterogeneous type of Charcot-Marie-Tooth neuropathy.</title>
        <authorList>
            <person name="Zuechner S."/>
            <person name="Vorgerd M."/>
            <person name="Sindern E."/>
            <person name="Schroeder J.M."/>
        </authorList>
    </citation>
    <scope>VARIANT CMTDIG LYS-396</scope>
</reference>
<reference key="18">
    <citation type="journal article" date="2007" name="Brain">
        <title>Charcot-Marie-Tooth disease type 2E, a disorder of the cytoskeleton.</title>
        <authorList>
            <person name="Fabrizi G.M."/>
            <person name="Cavallaro T."/>
            <person name="Angiari C."/>
            <person name="Cabrini I."/>
            <person name="Taioli F."/>
            <person name="Malerba G."/>
            <person name="Bertolasi L."/>
            <person name="Rizzuto N."/>
        </authorList>
    </citation>
    <scope>VARIANTS MET-213 AND ASN-468</scope>
    <scope>VARIANTS CMT2E SER-22; PRO-268 AND 322-CYS--ASN-326 DEL</scope>
    <scope>VARIANT CMTDIG LYS-396</scope>
</reference>
<reference key="19">
    <citation type="journal article" date="2011" name="PLoS ONE">
        <title>The mutational spectrum in a cohort of Charcot-Marie-Tooth disease type 2 among the Han Chinese in Taiwan.</title>
        <authorList>
            <person name="Lin K.P."/>
            <person name="Soong B.W."/>
            <person name="Yang C.C."/>
            <person name="Huang L.W."/>
            <person name="Chang M.H."/>
            <person name="Lee I.H."/>
            <person name="Antonellis A."/>
            <person name="Lee Y.C."/>
        </authorList>
    </citation>
    <scope>VARIANTS CMT2E ARG-8; SER-22 AND LYS-396</scope>
</reference>
<reference key="20">
    <citation type="journal article" date="2015" name="J. Neurol.">
        <title>NEFL E396K mutation is associated with a novel dominant intermediate Charcot-Marie-Tooth disease phenotype.</title>
        <authorList>
            <person name="Berciano J."/>
            <person name="Garcia A."/>
            <person name="Peeters K."/>
            <person name="Gallardo E."/>
            <person name="De Vriendt E."/>
            <person name="Pelayo-Negro A.L."/>
            <person name="Infante J."/>
            <person name="Jordanova A."/>
        </authorList>
    </citation>
    <scope>VARIANT CMTDIG LYS-396</scope>
    <scope>INVOLVEMENT IN CMTDIG</scope>
</reference>
<reference key="21">
    <citation type="journal article" date="2015" name="Mol. Genet. Genomic Med.">
        <title>Improved inherited peripheral neuropathy genetic diagnosis by whole-exome sequencing.</title>
        <authorList>
            <person name="Drew A.P."/>
            <person name="Zhu D."/>
            <person name="Kidambi A."/>
            <person name="Ly C."/>
            <person name="Tey S."/>
            <person name="Brewer M.H."/>
            <person name="Ahmad-Annuar A."/>
            <person name="Nicholson G.A."/>
            <person name="Kennerson M.L."/>
        </authorList>
    </citation>
    <scope>VARIANTS CMT2E CYS-265; PRO-268; PRO-336 AND LEU-440</scope>
</reference>
<reference key="22">
    <citation type="journal article" date="2016" name="J. Neurol.">
        <title>NEFL N98S mutation: another cause of dominant intermediate Charcot-Marie-Tooth disease with heterogeneous early-onset phenotype.</title>
        <authorList>
            <person name="Berciano J."/>
            <person name="Peeters K."/>
            <person name="Garcia A."/>
            <person name="Lopez-Alburquerque T."/>
            <person name="Gallardo E."/>
            <person name="Hernandez-Fabian A."/>
            <person name="Pelayo-Negro A.L."/>
            <person name="De Vriendt E."/>
            <person name="Infante J."/>
            <person name="Jordanova A."/>
        </authorList>
    </citation>
    <scope>VARIANT CMTDIG SER-98</scope>
    <scope>INVOLVEMENT IN CMTDIG</scope>
</reference>
<evidence type="ECO:0000250" key="1"/>
<evidence type="ECO:0000250" key="2">
    <source>
        <dbReference type="UniProtKB" id="P02548"/>
    </source>
</evidence>
<evidence type="ECO:0000250" key="3">
    <source>
        <dbReference type="UniProtKB" id="P08551"/>
    </source>
</evidence>
<evidence type="ECO:0000250" key="4">
    <source>
        <dbReference type="UniProtKB" id="P19527"/>
    </source>
</evidence>
<evidence type="ECO:0000255" key="5">
    <source>
        <dbReference type="PROSITE-ProRule" id="PRU01188"/>
    </source>
</evidence>
<evidence type="ECO:0000256" key="6">
    <source>
        <dbReference type="SAM" id="MobiDB-lite"/>
    </source>
</evidence>
<evidence type="ECO:0000269" key="7">
    <source>
    </source>
</evidence>
<evidence type="ECO:0000269" key="8">
    <source>
    </source>
</evidence>
<evidence type="ECO:0000269" key="9">
    <source>
    </source>
</evidence>
<evidence type="ECO:0000269" key="10">
    <source>
    </source>
</evidence>
<evidence type="ECO:0000269" key="11">
    <source>
    </source>
</evidence>
<evidence type="ECO:0000269" key="12">
    <source>
    </source>
</evidence>
<evidence type="ECO:0000269" key="13">
    <source>
    </source>
</evidence>
<evidence type="ECO:0000269" key="14">
    <source>
    </source>
</evidence>
<evidence type="ECO:0000269" key="15">
    <source>
    </source>
</evidence>
<evidence type="ECO:0000269" key="16">
    <source>
    </source>
</evidence>
<evidence type="ECO:0000269" key="17">
    <source>
    </source>
</evidence>
<evidence type="ECO:0000269" key="18">
    <source>
    </source>
</evidence>
<evidence type="ECO:0000305" key="19"/>
<evidence type="ECO:0007744" key="20">
    <source>
    </source>
</evidence>
<dbReference type="EMBL" id="X05608">
    <property type="protein sequence ID" value="CAA29097.1"/>
    <property type="molecule type" value="Genomic_DNA"/>
</dbReference>
<dbReference type="EMBL" id="AY156690">
    <property type="protein sequence ID" value="AAN74826.1"/>
    <property type="molecule type" value="mRNA"/>
</dbReference>
<dbReference type="EMBL" id="AC107373">
    <property type="status" value="NOT_ANNOTATED_CDS"/>
    <property type="molecule type" value="Genomic_DNA"/>
</dbReference>
<dbReference type="EMBL" id="CH471080">
    <property type="protein sequence ID" value="EAW63598.1"/>
    <property type="molecule type" value="Genomic_DNA"/>
</dbReference>
<dbReference type="EMBL" id="CH471080">
    <property type="protein sequence ID" value="EAW63599.1"/>
    <property type="molecule type" value="Genomic_DNA"/>
</dbReference>
<dbReference type="EMBL" id="CH471080">
    <property type="protein sequence ID" value="EAW63600.1"/>
    <property type="molecule type" value="Genomic_DNA"/>
</dbReference>
<dbReference type="EMBL" id="BC039237">
    <property type="protein sequence ID" value="AAH39237.1"/>
    <property type="molecule type" value="mRNA"/>
</dbReference>
<dbReference type="EMBL" id="S70309">
    <property type="protein sequence ID" value="AAD14057.1"/>
    <property type="molecule type" value="Genomic_DNA"/>
</dbReference>
<dbReference type="CCDS" id="CCDS75712.1"/>
<dbReference type="PIR" id="S07144">
    <property type="entry name" value="S07144"/>
</dbReference>
<dbReference type="RefSeq" id="NP_006149.2">
    <property type="nucleotide sequence ID" value="NM_006158.5"/>
</dbReference>
<dbReference type="SMR" id="P07196"/>
<dbReference type="BioGRID" id="110822">
    <property type="interactions" value="143"/>
</dbReference>
<dbReference type="FunCoup" id="P07196">
    <property type="interactions" value="327"/>
</dbReference>
<dbReference type="IntAct" id="P07196">
    <property type="interactions" value="167"/>
</dbReference>
<dbReference type="MINT" id="P07196"/>
<dbReference type="STRING" id="9606.ENSP00000482169"/>
<dbReference type="GlyCosmos" id="P07196">
    <property type="glycosylation" value="22 sites, 1 glycan"/>
</dbReference>
<dbReference type="GlyGen" id="P07196">
    <property type="glycosylation" value="24 sites, 1 O-linked glycan (24 sites)"/>
</dbReference>
<dbReference type="iPTMnet" id="P07196"/>
<dbReference type="PhosphoSitePlus" id="P07196"/>
<dbReference type="SwissPalm" id="P07196"/>
<dbReference type="BioMuta" id="NEFL"/>
<dbReference type="DMDM" id="62511894"/>
<dbReference type="jPOST" id="P07196"/>
<dbReference type="MassIVE" id="P07196"/>
<dbReference type="PaxDb" id="9606-ENSP00000482169"/>
<dbReference type="PeptideAtlas" id="P07196"/>
<dbReference type="ProteomicsDB" id="51961"/>
<dbReference type="Pumba" id="P07196"/>
<dbReference type="ABCD" id="P07196">
    <property type="antibodies" value="1 sequenced antibody"/>
</dbReference>
<dbReference type="Antibodypedia" id="73404">
    <property type="antibodies" value="1175 antibodies from 43 providers"/>
</dbReference>
<dbReference type="DNASU" id="4747"/>
<dbReference type="Ensembl" id="ENST00000610854.2">
    <property type="protein sequence ID" value="ENSP00000482169.2"/>
    <property type="gene ID" value="ENSG00000277586.4"/>
</dbReference>
<dbReference type="GeneID" id="4747"/>
<dbReference type="KEGG" id="hsa:4747"/>
<dbReference type="MANE-Select" id="ENST00000610854.2">
    <property type="protein sequence ID" value="ENSP00000482169.2"/>
    <property type="RefSeq nucleotide sequence ID" value="NM_006158.5"/>
    <property type="RefSeq protein sequence ID" value="NP_006149.2"/>
</dbReference>
<dbReference type="UCSC" id="uc033bfe.2">
    <property type="organism name" value="human"/>
</dbReference>
<dbReference type="AGR" id="HGNC:7739"/>
<dbReference type="CTD" id="4747"/>
<dbReference type="DisGeNET" id="4747"/>
<dbReference type="GeneCards" id="NEFL"/>
<dbReference type="GeneReviews" id="NEFL"/>
<dbReference type="HGNC" id="HGNC:7739">
    <property type="gene designation" value="NEFL"/>
</dbReference>
<dbReference type="HPA" id="ENSG00000277586">
    <property type="expression patterns" value="Group enriched (brain, retina)"/>
</dbReference>
<dbReference type="MalaCards" id="NEFL"/>
<dbReference type="MIM" id="162280">
    <property type="type" value="gene"/>
</dbReference>
<dbReference type="MIM" id="607684">
    <property type="type" value="phenotype"/>
</dbReference>
<dbReference type="MIM" id="607734">
    <property type="type" value="phenotype"/>
</dbReference>
<dbReference type="MIM" id="617882">
    <property type="type" value="phenotype"/>
</dbReference>
<dbReference type="neXtProt" id="NX_P07196"/>
<dbReference type="OpenTargets" id="ENSG00000277586"/>
<dbReference type="Orphanet" id="99939">
    <property type="disease" value="Autosomal dominant Charcot-Marie-Tooth disease type 2E"/>
</dbReference>
<dbReference type="Orphanet" id="101085">
    <property type="disease" value="Charcot-Marie-Tooth disease type 1F"/>
</dbReference>
<dbReference type="Orphanet" id="228374">
    <property type="disease" value="Charcot-Marie-Tooth disease type 2B5"/>
</dbReference>
<dbReference type="PharmGKB" id="PA31542"/>
<dbReference type="VEuPathDB" id="HostDB:ENSG00000277586"/>
<dbReference type="eggNOG" id="ENOG502QSXY">
    <property type="taxonomic scope" value="Eukaryota"/>
</dbReference>
<dbReference type="GeneTree" id="ENSGT00940000156208"/>
<dbReference type="HOGENOM" id="CLU_012560_7_3_1"/>
<dbReference type="InParanoid" id="P07196"/>
<dbReference type="OMA" id="YKRRYME"/>
<dbReference type="OrthoDB" id="2441647at2759"/>
<dbReference type="PAN-GO" id="P07196">
    <property type="GO annotations" value="6 GO annotations based on evolutionary models"/>
</dbReference>
<dbReference type="PhylomeDB" id="P07196"/>
<dbReference type="PathwayCommons" id="P07196"/>
<dbReference type="Reactome" id="R-HSA-438066">
    <property type="pathway name" value="Unblocking of NMDA receptors, glutamate binding and activation"/>
</dbReference>
<dbReference type="Reactome" id="R-HSA-442982">
    <property type="pathway name" value="Ras activation upon Ca2+ influx through NMDA receptor"/>
</dbReference>
<dbReference type="Reactome" id="R-HSA-5673001">
    <property type="pathway name" value="RAF/MAP kinase cascade"/>
</dbReference>
<dbReference type="Reactome" id="R-HSA-9609736">
    <property type="pathway name" value="Assembly and cell surface presentation of NMDA receptors"/>
</dbReference>
<dbReference type="Reactome" id="R-HSA-9617324">
    <property type="pathway name" value="Negative regulation of NMDA receptor-mediated neuronal transmission"/>
</dbReference>
<dbReference type="Reactome" id="R-HSA-9620244">
    <property type="pathway name" value="Long-term potentiation"/>
</dbReference>
<dbReference type="SignaLink" id="P07196"/>
<dbReference type="SIGNOR" id="P07196"/>
<dbReference type="BioGRID-ORCS" id="4747">
    <property type="hits" value="11 hits in 259 CRISPR screens"/>
</dbReference>
<dbReference type="CD-CODE" id="B5B9A610">
    <property type="entry name" value="PML body"/>
</dbReference>
<dbReference type="ChiTaRS" id="NEFL">
    <property type="organism name" value="human"/>
</dbReference>
<dbReference type="GeneWiki" id="NEFL"/>
<dbReference type="GenomeRNAi" id="4747"/>
<dbReference type="Pharos" id="P07196">
    <property type="development level" value="Tbio"/>
</dbReference>
<dbReference type="PRO" id="PR:P07196"/>
<dbReference type="Proteomes" id="UP000005640">
    <property type="component" value="Chromosome 8"/>
</dbReference>
<dbReference type="RNAct" id="P07196">
    <property type="molecule type" value="protein"/>
</dbReference>
<dbReference type="Bgee" id="ENSG00000277586">
    <property type="expression patterns" value="Expressed in dorsal root ganglion and 159 other cell types or tissues"/>
</dbReference>
<dbReference type="GO" id="GO:0030424">
    <property type="term" value="C:axon"/>
    <property type="evidence" value="ECO:0000314"/>
    <property type="project" value="UniProtKB"/>
</dbReference>
<dbReference type="GO" id="GO:1904115">
    <property type="term" value="C:axon cytoplasm"/>
    <property type="evidence" value="ECO:0007669"/>
    <property type="project" value="GOC"/>
</dbReference>
<dbReference type="GO" id="GO:0098981">
    <property type="term" value="C:cholinergic synapse"/>
    <property type="evidence" value="ECO:0007669"/>
    <property type="project" value="Ensembl"/>
</dbReference>
<dbReference type="GO" id="GO:0005737">
    <property type="term" value="C:cytoplasm"/>
    <property type="evidence" value="ECO:0000250"/>
    <property type="project" value="BHF-UCL"/>
</dbReference>
<dbReference type="GO" id="GO:0005829">
    <property type="term" value="C:cytosol"/>
    <property type="evidence" value="ECO:0000304"/>
    <property type="project" value="Reactome"/>
</dbReference>
<dbReference type="GO" id="GO:0030426">
    <property type="term" value="C:growth cone"/>
    <property type="evidence" value="ECO:0007669"/>
    <property type="project" value="Ensembl"/>
</dbReference>
<dbReference type="GO" id="GO:0005882">
    <property type="term" value="C:intermediate filament"/>
    <property type="evidence" value="ECO:0000318"/>
    <property type="project" value="GO_Central"/>
</dbReference>
<dbReference type="GO" id="GO:0005883">
    <property type="term" value="C:neurofilament"/>
    <property type="evidence" value="ECO:0000314"/>
    <property type="project" value="UniProtKB"/>
</dbReference>
<dbReference type="GO" id="GO:0031594">
    <property type="term" value="C:neuromuscular junction"/>
    <property type="evidence" value="ECO:0007669"/>
    <property type="project" value="Ensembl"/>
</dbReference>
<dbReference type="GO" id="GO:0099160">
    <property type="term" value="C:postsynaptic intermediate filament cytoskeleton"/>
    <property type="evidence" value="ECO:0000318"/>
    <property type="project" value="GO_Central"/>
</dbReference>
<dbReference type="GO" id="GO:0099182">
    <property type="term" value="C:presynaptic intermediate filament cytoskeleton"/>
    <property type="evidence" value="ECO:0007669"/>
    <property type="project" value="Ensembl"/>
</dbReference>
<dbReference type="GO" id="GO:0098685">
    <property type="term" value="C:Schaffer collateral - CA1 synapse"/>
    <property type="evidence" value="ECO:0007669"/>
    <property type="project" value="Ensembl"/>
</dbReference>
<dbReference type="GO" id="GO:0042802">
    <property type="term" value="F:identical protein binding"/>
    <property type="evidence" value="ECO:0000353"/>
    <property type="project" value="UniProtKB"/>
</dbReference>
<dbReference type="GO" id="GO:0043274">
    <property type="term" value="F:phospholipase binding"/>
    <property type="evidence" value="ECO:0007669"/>
    <property type="project" value="Ensembl"/>
</dbReference>
<dbReference type="GO" id="GO:0019904">
    <property type="term" value="F:protein domain specific binding"/>
    <property type="evidence" value="ECO:0007669"/>
    <property type="project" value="Ensembl"/>
</dbReference>
<dbReference type="GO" id="GO:0044877">
    <property type="term" value="F:protein-containing complex binding"/>
    <property type="evidence" value="ECO:0007669"/>
    <property type="project" value="Ensembl"/>
</dbReference>
<dbReference type="GO" id="GO:0030674">
    <property type="term" value="F:protein-macromolecule adaptor activity"/>
    <property type="evidence" value="ECO:0000250"/>
    <property type="project" value="BHF-UCL"/>
</dbReference>
<dbReference type="GO" id="GO:0005200">
    <property type="term" value="F:structural constituent of cytoskeleton"/>
    <property type="evidence" value="ECO:0000314"/>
    <property type="project" value="UniProtKB"/>
</dbReference>
<dbReference type="GO" id="GO:0099184">
    <property type="term" value="F:structural constituent of postsynaptic intermediate filament cytoskeleton"/>
    <property type="evidence" value="ECO:0000318"/>
    <property type="project" value="GO_Central"/>
</dbReference>
<dbReference type="GO" id="GO:0015631">
    <property type="term" value="F:tubulin binding"/>
    <property type="evidence" value="ECO:0000314"/>
    <property type="project" value="DisProt"/>
</dbReference>
<dbReference type="GO" id="GO:0008089">
    <property type="term" value="P:anterograde axonal transport"/>
    <property type="evidence" value="ECO:0000315"/>
    <property type="project" value="UniProtKB"/>
</dbReference>
<dbReference type="GO" id="GO:0019896">
    <property type="term" value="P:axonal transport of mitochondrion"/>
    <property type="evidence" value="ECO:0000315"/>
    <property type="project" value="UniProtKB"/>
</dbReference>
<dbReference type="GO" id="GO:0007409">
    <property type="term" value="P:axonogenesis"/>
    <property type="evidence" value="ECO:0007669"/>
    <property type="project" value="Ensembl"/>
</dbReference>
<dbReference type="GO" id="GO:0021987">
    <property type="term" value="P:cerebral cortex development"/>
    <property type="evidence" value="ECO:0007669"/>
    <property type="project" value="Ensembl"/>
</dbReference>
<dbReference type="GO" id="GO:0021766">
    <property type="term" value="P:hippocampus development"/>
    <property type="evidence" value="ECO:0007669"/>
    <property type="project" value="Ensembl"/>
</dbReference>
<dbReference type="GO" id="GO:0045109">
    <property type="term" value="P:intermediate filament organization"/>
    <property type="evidence" value="ECO:0000315"/>
    <property type="project" value="UniProtKB"/>
</dbReference>
<dbReference type="GO" id="GO:0045105">
    <property type="term" value="P:intermediate filament polymerization or depolymerization"/>
    <property type="evidence" value="ECO:0007669"/>
    <property type="project" value="Ensembl"/>
</dbReference>
<dbReference type="GO" id="GO:0040011">
    <property type="term" value="P:locomotion"/>
    <property type="evidence" value="ECO:0007669"/>
    <property type="project" value="Ensembl"/>
</dbReference>
<dbReference type="GO" id="GO:0000226">
    <property type="term" value="P:microtubule cytoskeleton organization"/>
    <property type="evidence" value="ECO:0007669"/>
    <property type="project" value="Ensembl"/>
</dbReference>
<dbReference type="GO" id="GO:0097049">
    <property type="term" value="P:motor neuron apoptotic process"/>
    <property type="evidence" value="ECO:0007669"/>
    <property type="project" value="Ensembl"/>
</dbReference>
<dbReference type="GO" id="GO:2000672">
    <property type="term" value="P:negative regulation of motor neuron apoptotic process"/>
    <property type="evidence" value="ECO:0007669"/>
    <property type="project" value="Ensembl"/>
</dbReference>
<dbReference type="GO" id="GO:0033693">
    <property type="term" value="P:neurofilament bundle assembly"/>
    <property type="evidence" value="ECO:0000314"/>
    <property type="project" value="UniProtKB"/>
</dbReference>
<dbReference type="GO" id="GO:0060052">
    <property type="term" value="P:neurofilament cytoskeleton organization"/>
    <property type="evidence" value="ECO:0007669"/>
    <property type="project" value="Ensembl"/>
</dbReference>
<dbReference type="GO" id="GO:0050885">
    <property type="term" value="P:neuromuscular process controlling balance"/>
    <property type="evidence" value="ECO:0007669"/>
    <property type="project" value="Ensembl"/>
</dbReference>
<dbReference type="GO" id="GO:0014012">
    <property type="term" value="P:peripheral nervous system axon regeneration"/>
    <property type="evidence" value="ECO:0007669"/>
    <property type="project" value="Ensembl"/>
</dbReference>
<dbReference type="GO" id="GO:0050772">
    <property type="term" value="P:positive regulation of axonogenesis"/>
    <property type="evidence" value="ECO:0007669"/>
    <property type="project" value="Ensembl"/>
</dbReference>
<dbReference type="GO" id="GO:0099170">
    <property type="term" value="P:postsynaptic modulation of chemical synaptic transmission"/>
    <property type="evidence" value="ECO:0007669"/>
    <property type="project" value="Ensembl"/>
</dbReference>
<dbReference type="GO" id="GO:0051258">
    <property type="term" value="P:protein polymerization"/>
    <property type="evidence" value="ECO:0007669"/>
    <property type="project" value="Ensembl"/>
</dbReference>
<dbReference type="GO" id="GO:0031133">
    <property type="term" value="P:regulation of axon diameter"/>
    <property type="evidence" value="ECO:0007669"/>
    <property type="project" value="Ensembl"/>
</dbReference>
<dbReference type="GO" id="GO:0090128">
    <property type="term" value="P:regulation of synapse maturation"/>
    <property type="evidence" value="ECO:0007669"/>
    <property type="project" value="Ensembl"/>
</dbReference>
<dbReference type="GO" id="GO:1903937">
    <property type="term" value="P:response to acrylamide"/>
    <property type="evidence" value="ECO:0007669"/>
    <property type="project" value="Ensembl"/>
</dbReference>
<dbReference type="GO" id="GO:0051412">
    <property type="term" value="P:response to corticosterone"/>
    <property type="evidence" value="ECO:0007669"/>
    <property type="project" value="Ensembl"/>
</dbReference>
<dbReference type="GO" id="GO:0043434">
    <property type="term" value="P:response to peptide hormone"/>
    <property type="evidence" value="ECO:0007669"/>
    <property type="project" value="Ensembl"/>
</dbReference>
<dbReference type="GO" id="GO:1903935">
    <property type="term" value="P:response to sodium arsenite"/>
    <property type="evidence" value="ECO:0007669"/>
    <property type="project" value="Ensembl"/>
</dbReference>
<dbReference type="GO" id="GO:0009636">
    <property type="term" value="P:response to toxic substance"/>
    <property type="evidence" value="ECO:0007669"/>
    <property type="project" value="Ensembl"/>
</dbReference>
<dbReference type="GO" id="GO:0008090">
    <property type="term" value="P:retrograde axonal transport"/>
    <property type="evidence" value="ECO:0000315"/>
    <property type="project" value="UniProtKB"/>
</dbReference>
<dbReference type="GO" id="GO:0021510">
    <property type="term" value="P:spinal cord development"/>
    <property type="evidence" value="ECO:0007669"/>
    <property type="project" value="Ensembl"/>
</dbReference>
<dbReference type="FunFam" id="1.20.5.1160:FF:000001">
    <property type="entry name" value="Keratin type II"/>
    <property type="match status" value="1"/>
</dbReference>
<dbReference type="FunFam" id="1.20.5.170:FF:000002">
    <property type="entry name" value="Type I keratin KA11"/>
    <property type="match status" value="1"/>
</dbReference>
<dbReference type="FunFam" id="1.20.5.500:FF:000001">
    <property type="entry name" value="Type II keratin 23"/>
    <property type="match status" value="1"/>
</dbReference>
<dbReference type="Gene3D" id="1.20.5.170">
    <property type="match status" value="1"/>
</dbReference>
<dbReference type="Gene3D" id="1.20.5.500">
    <property type="entry name" value="Single helix bin"/>
    <property type="match status" value="1"/>
</dbReference>
<dbReference type="Gene3D" id="1.20.5.1160">
    <property type="entry name" value="Vasodilator-stimulated phosphoprotein"/>
    <property type="match status" value="1"/>
</dbReference>
<dbReference type="InterPro" id="IPR018039">
    <property type="entry name" value="IF_conserved"/>
</dbReference>
<dbReference type="InterPro" id="IPR039008">
    <property type="entry name" value="IF_rod_dom"/>
</dbReference>
<dbReference type="InterPro" id="IPR006821">
    <property type="entry name" value="Intermed_filament_DNA-bd"/>
</dbReference>
<dbReference type="InterPro" id="IPR050405">
    <property type="entry name" value="Intermediate_filament"/>
</dbReference>
<dbReference type="PANTHER" id="PTHR45652">
    <property type="entry name" value="GLIAL FIBRILLARY ACIDIC PROTEIN"/>
    <property type="match status" value="1"/>
</dbReference>
<dbReference type="PANTHER" id="PTHR45652:SF8">
    <property type="entry name" value="NEUROFILAMENT LIGHT POLYPEPTIDE"/>
    <property type="match status" value="1"/>
</dbReference>
<dbReference type="Pfam" id="PF00038">
    <property type="entry name" value="Filament"/>
    <property type="match status" value="1"/>
</dbReference>
<dbReference type="Pfam" id="PF04732">
    <property type="entry name" value="Filament_head"/>
    <property type="match status" value="1"/>
</dbReference>
<dbReference type="SMART" id="SM01391">
    <property type="entry name" value="Filament"/>
    <property type="match status" value="1"/>
</dbReference>
<dbReference type="SUPFAM" id="SSF64593">
    <property type="entry name" value="Intermediate filament protein, coiled coil region"/>
    <property type="match status" value="2"/>
</dbReference>
<dbReference type="PROSITE" id="PS00226">
    <property type="entry name" value="IF_ROD_1"/>
    <property type="match status" value="1"/>
</dbReference>
<dbReference type="PROSITE" id="PS51842">
    <property type="entry name" value="IF_ROD_2"/>
    <property type="match status" value="1"/>
</dbReference>
<sequence>MSSFSYEPYYSTSYKRRYVETPRVHISSVRSGYSTARSAYSSYSAPVSSSLSVRRSYSSSSGSLMPSLENLDLSQVAAISNDLKSIRTQEKAQLQDLNDRFASFIERVHELEQQNKVLEAELLVLRQKHSEPSRFRALYEQEIRDLRLAAEDATNEKQALQGEREGLEETLRNLQARYEEEVLSREDAEGRLMEARKGADEAALARAELEKRIDSLMDEISFLKKVHEEEIAELQAQIQYAQISVEMDVTKPDLSAALKDIRAQYEKLAAKNMQNAEEWFKSRFTVLTESAAKNTDAVRAAKDEVSESRRLLKAKTLEIEACRGMNEALEKQLQELEDKQNADISAMQDTINKLENELRTTKSEMARYLKEYQDLLNVKMALDIEIAAYRKLLEGEETRLSFTSVGSITSGYSQSSQVFGRSAYGGLQTSSYLMSTRSFPSYYTSHVQEEQIEVEETIEAAKAEEAKDEPPSEGEAEEEEKDKEEAEEEEAAEEEEAAKEESEEAKEEEEGGEGEEGEETKEAEEEEKKVEGAGEEQAAKKKD</sequence>
<proteinExistence type="evidence at protein level"/>
<comment type="function">
    <text evidence="3">Neurofilaments usually contain three intermediate filament proteins: NEFL, NEFM, and NEFH which are involved in the maintenance of neuronal caliber. May additionally cooperate with the neuronal intermediate filament proteins PRPH and INA to form neuronal filamentous networks (By similarity).</text>
</comment>
<comment type="subunit">
    <text evidence="1 4">Forms homodimers (in vitro) (By similarity). Forms heterodimers with NEFH or NEFM; which can further hetero-oligomerize (in vitro) (By similarity). Forms heterodimers with INA (in vitro) (By similarity). Interacts with ARHGEF28. Interacts with TRIM2.</text>
</comment>
<comment type="interaction">
    <interactant intactId="EBI-475646">
        <id>P07196</id>
    </interactant>
    <interactant intactId="EBI-1223922">
        <id>P20933</id>
        <label>AGA</label>
    </interactant>
    <organismsDiffer>false</organismsDiffer>
    <experiments>3</experiments>
</comment>
<comment type="interaction">
    <interactant intactId="EBI-475646">
        <id>P07196</id>
    </interactant>
    <interactant intactId="EBI-2556915">
        <id>P13928</id>
        <label>ANXA8</label>
    </interactant>
    <organismsDiffer>false</organismsDiffer>
    <experiments>3</experiments>
</comment>
<comment type="interaction">
    <interactant intactId="EBI-475646">
        <id>P07196</id>
    </interactant>
    <interactant intactId="EBI-2875816">
        <id>Q9NP61</id>
        <label>ARFGAP3</label>
    </interactant>
    <organismsDiffer>false</organismsDiffer>
    <experiments>3</experiments>
</comment>
<comment type="interaction">
    <interactant intactId="EBI-475646">
        <id>P07196</id>
    </interactant>
    <interactant intactId="EBI-14199987">
        <id>Q9Y575-3</id>
        <label>ASB3</label>
    </interactant>
    <organismsDiffer>false</organismsDiffer>
    <experiments>3</experiments>
</comment>
<comment type="interaction">
    <interactant intactId="EBI-475646">
        <id>P07196</id>
    </interactant>
    <interactant intactId="EBI-4290814">
        <id>P21281</id>
        <label>ATP6V1B2</label>
    </interactant>
    <organismsDiffer>false</organismsDiffer>
    <experiments>3</experiments>
</comment>
<comment type="interaction">
    <interactant intactId="EBI-475646">
        <id>P07196</id>
    </interactant>
    <interactant intactId="EBI-747185">
        <id>O95817</id>
        <label>BAG3</label>
    </interactant>
    <organismsDiffer>false</organismsDiffer>
    <experiments>3</experiments>
</comment>
<comment type="interaction">
    <interactant intactId="EBI-475646">
        <id>P07196</id>
    </interactant>
    <interactant intactId="EBI-4280811">
        <id>Q8IXM2</id>
        <label>BAP18</label>
    </interactant>
    <organismsDiffer>false</organismsDiffer>
    <experiments>3</experiments>
</comment>
<comment type="interaction">
    <interactant intactId="EBI-475646">
        <id>P07196</id>
    </interactant>
    <interactant intactId="EBI-751596">
        <id>Q96LL4</id>
        <label>C8orf48</label>
    </interactant>
    <organismsDiffer>false</organismsDiffer>
    <experiments>3</experiments>
</comment>
<comment type="interaction">
    <interactant intactId="EBI-475646">
        <id>P07196</id>
    </interactant>
    <interactant intactId="EBI-25850646">
        <id>Q8N5S9-2</id>
        <label>CAMKK1</label>
    </interactant>
    <organismsDiffer>false</organismsDiffer>
    <experiments>3</experiments>
</comment>
<comment type="interaction">
    <interactant intactId="EBI-475646">
        <id>P07196</id>
    </interactant>
    <interactant intactId="EBI-10961312">
        <id>Q8IYE1</id>
        <label>CCDC13</label>
    </interactant>
    <organismsDiffer>false</organismsDiffer>
    <experiments>3</experiments>
</comment>
<comment type="interaction">
    <interactant intactId="EBI-475646">
        <id>P07196</id>
    </interactant>
    <interactant intactId="EBI-2548868">
        <id>P0C7W6</id>
        <label>CCDC172</label>
    </interactant>
    <organismsDiffer>false</organismsDiffer>
    <experiments>3</experiments>
</comment>
<comment type="interaction">
    <interactant intactId="EBI-475646">
        <id>P07196</id>
    </interactant>
    <interactant intactId="EBI-10181422">
        <id>A0A1B0GWI1</id>
        <label>CCDC196</label>
    </interactant>
    <organismsDiffer>false</organismsDiffer>
    <experiments>3</experiments>
</comment>
<comment type="interaction">
    <interactant intactId="EBI-475646">
        <id>P07196</id>
    </interactant>
    <interactant intactId="EBI-12696312">
        <id>Q6P2R3</id>
        <label>CEP57L1</label>
    </interactant>
    <organismsDiffer>false</organismsDiffer>
    <experiments>3</experiments>
</comment>
<comment type="interaction">
    <interactant intactId="EBI-475646">
        <id>P07196</id>
    </interactant>
    <interactant intactId="EBI-11953200">
        <id>Q494V2-2</id>
        <label>CFAP100</label>
    </interactant>
    <organismsDiffer>false</organismsDiffer>
    <experiments>3</experiments>
</comment>
<comment type="interaction">
    <interactant intactId="EBI-475646">
        <id>P07196</id>
    </interactant>
    <interactant intactId="EBI-3957044">
        <id>Q9Y240</id>
        <label>CLEC11A</label>
    </interactant>
    <organismsDiffer>false</organismsDiffer>
    <experiments>3</experiments>
</comment>
<comment type="interaction">
    <interactant intactId="EBI-475646">
        <id>P07196</id>
    </interactant>
    <interactant intactId="EBI-2872414">
        <id>Q8IUI8</id>
        <label>CRLF3</label>
    </interactant>
    <organismsDiffer>false</organismsDiffer>
    <experiments>3</experiments>
</comment>
<comment type="interaction">
    <interactant intactId="EBI-475646">
        <id>P07196</id>
    </interactant>
    <interactant intactId="EBI-1048143">
        <id>Q7L576</id>
        <label>CYFIP1</label>
    </interactant>
    <organismsDiffer>false</organismsDiffer>
    <experiments>3</experiments>
</comment>
<comment type="interaction">
    <interactant intactId="EBI-475646">
        <id>P07196</id>
    </interactant>
    <interactant intactId="EBI-25842815">
        <id>Q5TAQ9-2</id>
        <label>DCAF8</label>
    </interactant>
    <organismsDiffer>false</organismsDiffer>
    <experiments>3</experiments>
</comment>
<comment type="interaction">
    <interactant intactId="EBI-475646">
        <id>P07196</id>
    </interactant>
    <interactant intactId="EBI-1055572">
        <id>P17661</id>
        <label>DES</label>
    </interactant>
    <organismsDiffer>false</organismsDiffer>
    <experiments>8</experiments>
</comment>
<comment type="interaction">
    <interactant intactId="EBI-475646">
        <id>P07196</id>
    </interactant>
    <interactant intactId="EBI-1176455">
        <id>P63172</id>
        <label>DYNLT1</label>
    </interactant>
    <organismsDiffer>false</organismsDiffer>
    <experiments>3</experiments>
</comment>
<comment type="interaction">
    <interactant intactId="EBI-475646">
        <id>P07196</id>
    </interactant>
    <interactant intactId="EBI-12920100">
        <id>Q6UXG2-3</id>
        <label>ELAPOR1</label>
    </interactant>
    <organismsDiffer>false</organismsDiffer>
    <experiments>3</experiments>
</comment>
<comment type="interaction">
    <interactant intactId="EBI-475646">
        <id>P07196</id>
    </interactant>
    <interactant intactId="EBI-3940939">
        <id>Q9H6S3</id>
        <label>EPS8L2</label>
    </interactant>
    <organismsDiffer>false</organismsDiffer>
    <experiments>3</experiments>
</comment>
<comment type="interaction">
    <interactant intactId="EBI-475646">
        <id>P07196</id>
    </interactant>
    <interactant intactId="EBI-9089567">
        <id>Q99504</id>
        <label>EYA3</label>
    </interactant>
    <organismsDiffer>false</organismsDiffer>
    <experiments>3</experiments>
</comment>
<comment type="interaction">
    <interactant intactId="EBI-475646">
        <id>P07196</id>
    </interactant>
    <interactant intactId="EBI-12902289">
        <id>Q6P587-2</id>
        <label>FAHD1</label>
    </interactant>
    <organismsDiffer>false</organismsDiffer>
    <experiments>3</experiments>
</comment>
<comment type="interaction">
    <interactant intactId="EBI-475646">
        <id>P07196</id>
    </interactant>
    <interactant intactId="EBI-8468186">
        <id>Q8IZU1</id>
        <label>FAM9A</label>
    </interactant>
    <organismsDiffer>false</organismsDiffer>
    <experiments>3</experiments>
</comment>
<comment type="interaction">
    <interactant intactId="EBI-475646">
        <id>P07196</id>
    </interactant>
    <interactant intactId="EBI-21975404">
        <id>Q8TC84</id>
        <label>FANK1</label>
    </interactant>
    <organismsDiffer>false</organismsDiffer>
    <experiments>3</experiments>
</comment>
<comment type="interaction">
    <interactant intactId="EBI-475646">
        <id>P07196</id>
    </interactant>
    <interactant intactId="EBI-3957005">
        <id>Q53R41</id>
        <label>FASTKD1</label>
    </interactant>
    <organismsDiffer>false</organismsDiffer>
    <experiments>3</experiments>
</comment>
<comment type="interaction">
    <interactant intactId="EBI-475646">
        <id>P07196</id>
    </interactant>
    <interactant intactId="EBI-751757">
        <id>Q7L622</id>
        <label>G2E3</label>
    </interactant>
    <organismsDiffer>false</organismsDiffer>
    <experiments>3</experiments>
</comment>
<comment type="interaction">
    <interactant intactId="EBI-475646">
        <id>P07196</id>
    </interactant>
    <interactant intactId="EBI-744302">
        <id>P14136</id>
        <label>GFAP</label>
    </interactant>
    <organismsDiffer>false</organismsDiffer>
    <experiments>11</experiments>
</comment>
<comment type="interaction">
    <interactant intactId="EBI-475646">
        <id>P07196</id>
    </interactant>
    <interactant intactId="EBI-8799578">
        <id>Q9NXC2</id>
        <label>GFOD1</label>
    </interactant>
    <organismsDiffer>false</organismsDiffer>
    <experiments>3</experiments>
</comment>
<comment type="interaction">
    <interactant intactId="EBI-475646">
        <id>P07196</id>
    </interactant>
    <interactant intactId="EBI-618309">
        <id>Q08379</id>
        <label>GOLGA2</label>
    </interactant>
    <organismsDiffer>false</organismsDiffer>
    <experiments>3</experiments>
</comment>
<comment type="interaction">
    <interactant intactId="EBI-475646">
        <id>P07196</id>
    </interactant>
    <interactant intactId="EBI-2561458">
        <id>Q9BQQ3</id>
        <label>GORASP1</label>
    </interactant>
    <organismsDiffer>false</organismsDiffer>
    <experiments>3</experiments>
</comment>
<comment type="interaction">
    <interactant intactId="EBI-475646">
        <id>P07196</id>
    </interactant>
    <interactant intactId="EBI-17178971">
        <id>Q14005-2</id>
        <label>IL16</label>
    </interactant>
    <organismsDiffer>false</organismsDiffer>
    <experiments>3</experiments>
</comment>
<comment type="interaction">
    <interactant intactId="EBI-475646">
        <id>P07196</id>
    </interactant>
    <interactant intactId="EBI-739493">
        <id>Q6ZU52</id>
        <label>KIAA0408</label>
    </interactant>
    <organismsDiffer>false</organismsDiffer>
    <experiments>3</experiments>
</comment>
<comment type="interaction">
    <interactant intactId="EBI-475646">
        <id>P07196</id>
    </interactant>
    <interactant intactId="EBI-14069005">
        <id>Q9BVG8-5</id>
        <label>KIFC3</label>
    </interactant>
    <organismsDiffer>false</organismsDiffer>
    <experiments>3</experiments>
</comment>
<comment type="interaction">
    <interactant intactId="EBI-475646">
        <id>P07196</id>
    </interactant>
    <interactant intactId="EBI-11033402">
        <id>Q6P597-2</id>
        <label>KLC3</label>
    </interactant>
    <organismsDiffer>false</organismsDiffer>
    <experiments>3</experiments>
</comment>
<comment type="interaction">
    <interactant intactId="EBI-475646">
        <id>P07196</id>
    </interactant>
    <interactant intactId="EBI-1223876">
        <id>P13646</id>
        <label>KRT13</label>
    </interactant>
    <organismsDiffer>false</organismsDiffer>
    <experiments>3</experiments>
</comment>
<comment type="interaction">
    <interactant intactId="EBI-475646">
        <id>P07196</id>
    </interactant>
    <interactant intactId="EBI-739566">
        <id>P19012</id>
        <label>KRT15</label>
    </interactant>
    <organismsDiffer>false</organismsDiffer>
    <experiments>3</experiments>
</comment>
<comment type="interaction">
    <interactant intactId="EBI-475646">
        <id>P07196</id>
    </interactant>
    <interactant intactId="EBI-297888">
        <id>P05783</id>
        <label>KRT18</label>
    </interactant>
    <organismsDiffer>false</organismsDiffer>
    <experiments>3</experiments>
</comment>
<comment type="interaction">
    <interactant intactId="EBI-475646">
        <id>P07196</id>
    </interactant>
    <interactant intactId="EBI-742756">
        <id>P08727</id>
        <label>KRT19</label>
    </interactant>
    <organismsDiffer>false</organismsDiffer>
    <experiments>3</experiments>
</comment>
<comment type="interaction">
    <interactant intactId="EBI-475646">
        <id>P07196</id>
    </interactant>
    <interactant intactId="EBI-1049638">
        <id>Q14525</id>
        <label>KRT33B</label>
    </interactant>
    <organismsDiffer>false</organismsDiffer>
    <experiments>3</experiments>
</comment>
<comment type="interaction">
    <interactant intactId="EBI-475646">
        <id>P07196</id>
    </interactant>
    <interactant intactId="EBI-10261141">
        <id>Q8IUC2</id>
        <label>KRTAP8-1</label>
    </interactant>
    <organismsDiffer>false</organismsDiffer>
    <experiments>3</experiments>
</comment>
<comment type="interaction">
    <interactant intactId="EBI-475646">
        <id>P07196</id>
    </interactant>
    <interactant intactId="EBI-9088686">
        <id>Q14847-2</id>
        <label>LASP1</label>
    </interactant>
    <organismsDiffer>false</organismsDiffer>
    <experiments>3</experiments>
</comment>
<comment type="interaction">
    <interactant intactId="EBI-475646">
        <id>P07196</id>
    </interactant>
    <interactant intactId="EBI-9088215">
        <id>A2RU56</id>
        <label>LOC401296</label>
    </interactant>
    <organismsDiffer>false</organismsDiffer>
    <experiments>3</experiments>
</comment>
<comment type="interaction">
    <interactant intactId="EBI-475646">
        <id>P07196</id>
    </interactant>
    <interactant intactId="EBI-10182361">
        <id>Q9NS73-5</id>
        <label>MBIP</label>
    </interactant>
    <organismsDiffer>false</organismsDiffer>
    <experiments>3</experiments>
</comment>
<comment type="interaction">
    <interactant intactId="EBI-475646">
        <id>P07196</id>
    </interactant>
    <interactant intactId="EBI-1189067">
        <id>P51608</id>
        <label>MECP2</label>
    </interactant>
    <organismsDiffer>false</organismsDiffer>
    <experiments>3</experiments>
</comment>
<comment type="interaction">
    <interactant intactId="EBI-475646">
        <id>P07196</id>
    </interactant>
    <interactant intactId="EBI-8475277">
        <id>Q15049</id>
        <label>MLC1</label>
    </interactant>
    <organismsDiffer>false</organismsDiffer>
    <experiments>3</experiments>
</comment>
<comment type="interaction">
    <interactant intactId="EBI-475646">
        <id>P07196</id>
    </interactant>
    <interactant intactId="EBI-10699187">
        <id>Q8IXL7-2</id>
        <label>MSRB3</label>
    </interactant>
    <organismsDiffer>false</organismsDiffer>
    <experiments>3</experiments>
</comment>
<comment type="interaction">
    <interactant intactId="EBI-475646">
        <id>P07196</id>
    </interactant>
    <interactant intactId="EBI-475631">
        <id>Q13614</id>
        <label>MTMR2</label>
    </interactant>
    <organismsDiffer>false</organismsDiffer>
    <experiments>2</experiments>
</comment>
<comment type="interaction">
    <interactant intactId="EBI-475646">
        <id>P07196</id>
    </interactant>
    <interactant intactId="EBI-7950783">
        <id>Q96JP2</id>
        <label>MYO15B</label>
    </interactant>
    <organismsDiffer>false</organismsDiffer>
    <experiments>3</experiments>
</comment>
<comment type="interaction">
    <interactant intactId="EBI-475646">
        <id>P07196</id>
    </interactant>
    <interactant intactId="EBI-718177">
        <id>Q99608</id>
        <label>NDN</label>
    </interactant>
    <organismsDiffer>false</organismsDiffer>
    <experiments>4</experiments>
</comment>
<comment type="interaction">
    <interactant intactId="EBI-475646">
        <id>P07196</id>
    </interactant>
    <interactant intactId="EBI-2880203">
        <id>O76041</id>
        <label>NEBL</label>
    </interactant>
    <organismsDiffer>false</organismsDiffer>
    <experiments>3</experiments>
</comment>
<comment type="interaction">
    <interactant intactId="EBI-475646">
        <id>P07196</id>
    </interactant>
    <interactant intactId="EBI-1105035">
        <id>P07197</id>
        <label>NEFM</label>
    </interactant>
    <organismsDiffer>false</organismsDiffer>
    <experiments>6</experiments>
</comment>
<comment type="interaction">
    <interactant intactId="EBI-475646">
        <id>P07196</id>
    </interactant>
    <interactant intactId="EBI-11750983">
        <id>Q9HC98-4</id>
        <label>NEK6</label>
    </interactant>
    <organismsDiffer>false</organismsDiffer>
    <experiments>3</experiments>
</comment>
<comment type="interaction">
    <interactant intactId="EBI-475646">
        <id>P07196</id>
    </interactant>
    <interactant intactId="EBI-744782">
        <id>Q9Y5B8</id>
        <label>NME7</label>
    </interactant>
    <organismsDiffer>false</organismsDiffer>
    <experiments>3</experiments>
</comment>
<comment type="interaction">
    <interactant intactId="EBI-475646">
        <id>P07196</id>
    </interactant>
    <interactant intactId="EBI-25842707">
        <id>Q6X4W1-6</id>
        <label>NSMF</label>
    </interactant>
    <organismsDiffer>false</organismsDiffer>
    <experiments>3</experiments>
</comment>
<comment type="interaction">
    <interactant intactId="EBI-475646">
        <id>P07196</id>
    </interactant>
    <interactant intactId="EBI-1210753">
        <id>Q7Z417</id>
        <label>NUFIP2</label>
    </interactant>
    <organismsDiffer>false</organismsDiffer>
    <experiments>3</experiments>
</comment>
<comment type="interaction">
    <interactant intactId="EBI-475646">
        <id>P07196</id>
    </interactant>
    <interactant intactId="EBI-536879">
        <id>O43482</id>
        <label>OIP5</label>
    </interactant>
    <organismsDiffer>false</organismsDiffer>
    <experiments>3</experiments>
</comment>
<comment type="interaction">
    <interactant intactId="EBI-475646">
        <id>P07196</id>
    </interactant>
    <interactant intactId="EBI-741896">
        <id>Q9P286</id>
        <label>PAK5</label>
    </interactant>
    <organismsDiffer>false</organismsDiffer>
    <experiments>3</experiments>
</comment>
<comment type="interaction">
    <interactant intactId="EBI-475646">
        <id>P07196</id>
    </interactant>
    <interactant intactId="EBI-1043580">
        <id>Q9BRX2</id>
        <label>PELO</label>
    </interactant>
    <organismsDiffer>false</organismsDiffer>
    <experiments>3</experiments>
</comment>
<comment type="interaction">
    <interactant intactId="EBI-475646">
        <id>P07196</id>
    </interactant>
    <interactant intactId="EBI-12339509">
        <id>Q96LB9</id>
        <label>PGLYRP3</label>
    </interactant>
    <organismsDiffer>false</organismsDiffer>
    <experiments>3</experiments>
</comment>
<comment type="interaction">
    <interactant intactId="EBI-475646">
        <id>P07196</id>
    </interactant>
    <interactant intactId="EBI-602382">
        <id>Q16512</id>
        <label>PKN1</label>
    </interactant>
    <organismsDiffer>false</organismsDiffer>
    <experiments>3</experiments>
</comment>
<comment type="interaction">
    <interactant intactId="EBI-475646">
        <id>P07196</id>
    </interactant>
    <interactant intactId="EBI-2557469">
        <id>Q6NYC8</id>
        <label>PPP1R18</label>
    </interactant>
    <organismsDiffer>false</organismsDiffer>
    <experiments>3</experiments>
</comment>
<comment type="interaction">
    <interactant intactId="EBI-475646">
        <id>P07196</id>
    </interactant>
    <interactant intactId="EBI-9089276">
        <id>Q8NI37</id>
        <label>PPTC7</label>
    </interactant>
    <organismsDiffer>false</organismsDiffer>
    <experiments>3</experiments>
</comment>
<comment type="interaction">
    <interactant intactId="EBI-475646">
        <id>P07196</id>
    </interactant>
    <interactant intactId="EBI-746228">
        <id>Q9Y5P3</id>
        <label>RAI2</label>
    </interactant>
    <organismsDiffer>false</organismsDiffer>
    <experiments>3</experiments>
</comment>
<comment type="interaction">
    <interactant intactId="EBI-475646">
        <id>P07196</id>
    </interactant>
    <interactant intactId="EBI-954272">
        <id>Q96PK6</id>
        <label>RBM14</label>
    </interactant>
    <organismsDiffer>false</organismsDiffer>
    <experiments>3</experiments>
</comment>
<comment type="interaction">
    <interactant intactId="EBI-475646">
        <id>P07196</id>
    </interactant>
    <interactant intactId="EBI-1504830">
        <id>Q9P2K3-2</id>
        <label>RCOR3</label>
    </interactant>
    <organismsDiffer>false</organismsDiffer>
    <experiments>3</experiments>
</comment>
<comment type="interaction">
    <interactant intactId="EBI-475646">
        <id>P07196</id>
    </interactant>
    <interactant intactId="EBI-746325">
        <id>Q8TCX5</id>
        <label>RHPN1</label>
    </interactant>
    <organismsDiffer>false</organismsDiffer>
    <experiments>3</experiments>
</comment>
<comment type="interaction">
    <interactant intactId="EBI-475646">
        <id>P07196</id>
    </interactant>
    <interactant intactId="EBI-752324">
        <id>Q8N488</id>
        <label>RYBP</label>
    </interactant>
    <organismsDiffer>false</organismsDiffer>
    <experiments>3</experiments>
</comment>
<comment type="interaction">
    <interactant intactId="EBI-475646">
        <id>P07196</id>
    </interactant>
    <interactant intactId="EBI-743700">
        <id>P25815</id>
        <label>S100P</label>
    </interactant>
    <organismsDiffer>false</organismsDiffer>
    <experiments>4</experiments>
</comment>
<comment type="interaction">
    <interactant intactId="EBI-475646">
        <id>P07196</id>
    </interactant>
    <interactant intactId="EBI-2902468">
        <id>P12757</id>
        <label>SKIL</label>
    </interactant>
    <organismsDiffer>false</organismsDiffer>
    <experiments>6</experiments>
</comment>
<comment type="interaction">
    <interactant intactId="EBI-475646">
        <id>P07196</id>
    </interactant>
    <interactant intactId="EBI-8463848">
        <id>Q8NB12</id>
        <label>SMYD1</label>
    </interactant>
    <organismsDiffer>false</organismsDiffer>
    <experiments>3</experiments>
</comment>
<comment type="interaction">
    <interactant intactId="EBI-475646">
        <id>P07196</id>
    </interactant>
    <interactant intactId="EBI-632715">
        <id>Q13573</id>
        <label>SNW1</label>
    </interactant>
    <organismsDiffer>false</organismsDiffer>
    <experiments>3</experiments>
</comment>
<comment type="interaction">
    <interactant intactId="EBI-475646">
        <id>P07196</id>
    </interactant>
    <interactant intactId="EBI-11959123">
        <id>Q99932-2</id>
        <label>SPAG8</label>
    </interactant>
    <organismsDiffer>false</organismsDiffer>
    <experiments>3</experiments>
</comment>
<comment type="interaction">
    <interactant intactId="EBI-475646">
        <id>P07196</id>
    </interactant>
    <interactant intactId="EBI-10174456">
        <id>Q8N865</id>
        <label>SPMIP4</label>
    </interactant>
    <organismsDiffer>false</organismsDiffer>
    <experiments>3</experiments>
</comment>
<comment type="interaction">
    <interactant intactId="EBI-475646">
        <id>P07196</id>
    </interactant>
    <interactant intactId="EBI-11285923">
        <id>Q9H7C4</id>
        <label>SYNC</label>
    </interactant>
    <organismsDiffer>false</organismsDiffer>
    <experiments>5</experiments>
</comment>
<comment type="interaction">
    <interactant intactId="EBI-475646">
        <id>P07196</id>
    </interactant>
    <interactant intactId="EBI-17284568">
        <id>Q9BQG1</id>
        <label>SYT3</label>
    </interactant>
    <organismsDiffer>false</organismsDiffer>
    <experiments>3</experiments>
</comment>
<comment type="interaction">
    <interactant intactId="EBI-475646">
        <id>P07196</id>
    </interactant>
    <interactant intactId="EBI-18173581">
        <id>Q86TJ2-3</id>
        <label>TADA2B</label>
    </interactant>
    <organismsDiffer>false</organismsDiffer>
    <experiments>3</experiments>
</comment>
<comment type="interaction">
    <interactant intactId="EBI-475646">
        <id>P07196</id>
    </interactant>
    <interactant intactId="EBI-745958">
        <id>Q5VWN6</id>
        <label>TASOR2</label>
    </interactant>
    <organismsDiffer>false</organismsDiffer>
    <experiments>3</experiments>
</comment>
<comment type="interaction">
    <interactant intactId="EBI-475646">
        <id>P07196</id>
    </interactant>
    <interactant intactId="EBI-3923210">
        <id>Q8TDR4</id>
        <label>TCP10L</label>
    </interactant>
    <organismsDiffer>false</organismsDiffer>
    <experiments>3</experiments>
</comment>
<comment type="interaction">
    <interactant intactId="EBI-475646">
        <id>P07196</id>
    </interactant>
    <interactant intactId="EBI-348333">
        <id>Q13569</id>
        <label>TDG</label>
    </interactant>
    <organismsDiffer>false</organismsDiffer>
    <experiments>3</experiments>
</comment>
<comment type="interaction">
    <interactant intactId="EBI-475646">
        <id>P07196</id>
    </interactant>
    <interactant intactId="EBI-710997">
        <id>P54274</id>
        <label>TERF1</label>
    </interactant>
    <organismsDiffer>false</organismsDiffer>
    <experiments>2</experiments>
</comment>
<comment type="interaction">
    <interactant intactId="EBI-475646">
        <id>P07196</id>
    </interactant>
    <interactant intactId="EBI-9090990">
        <id>Q5W5X9-3</id>
        <label>TTC23</label>
    </interactant>
    <organismsDiffer>false</organismsDiffer>
    <experiments>3</experiments>
</comment>
<comment type="interaction">
    <interactant intactId="EBI-475646">
        <id>P07196</id>
    </interactant>
    <interactant intactId="EBI-10964469">
        <id>Q9UGJ1-2</id>
        <label>TUBGCP4</label>
    </interactant>
    <organismsDiffer>false</organismsDiffer>
    <experiments>3</experiments>
</comment>
<comment type="interaction">
    <interactant intactId="EBI-475646">
        <id>P07196</id>
    </interactant>
    <interactant intactId="EBI-9088812">
        <id>Q5VYS8-5</id>
        <label>TUT7</label>
    </interactant>
    <organismsDiffer>false</organismsDiffer>
    <experiments>3</experiments>
</comment>
<comment type="interaction">
    <interactant intactId="EBI-475646">
        <id>P07196</id>
    </interactant>
    <interactant intactId="EBI-743272">
        <id>O75604</id>
        <label>USP2</label>
    </interactant>
    <organismsDiffer>false</organismsDiffer>
    <experiments>3</experiments>
</comment>
<comment type="interaction">
    <interactant intactId="EBI-475646">
        <id>P07196</id>
    </interactant>
    <interactant intactId="EBI-354022">
        <id>P45880</id>
        <label>VDAC2</label>
    </interactant>
    <organismsDiffer>false</organismsDiffer>
    <experiments>3</experiments>
</comment>
<comment type="interaction">
    <interactant intactId="EBI-475646">
        <id>P07196</id>
    </interactant>
    <interactant intactId="EBI-353844">
        <id>P08670</id>
        <label>VIM</label>
    </interactant>
    <organismsDiffer>false</organismsDiffer>
    <experiments>5</experiments>
</comment>
<comment type="interaction">
    <interactant intactId="EBI-475646">
        <id>P07196</id>
    </interactant>
    <interactant intactId="EBI-6427899">
        <id>P58304</id>
        <label>VSX2</label>
    </interactant>
    <organismsDiffer>false</organismsDiffer>
    <experiments>3</experiments>
</comment>
<comment type="interaction">
    <interactant intactId="EBI-475646">
        <id>P07196</id>
    </interactant>
    <interactant intactId="EBI-14104088">
        <id>Q53FD0-2</id>
        <label>ZC2HC1C</label>
    </interactant>
    <organismsDiffer>false</organismsDiffer>
    <experiments>3</experiments>
</comment>
<comment type="interaction">
    <interactant intactId="EBI-475646">
        <id>P07196</id>
    </interactant>
    <interactant intactId="EBI-2602314">
        <id>Q15776</id>
        <label>ZKSCAN8</label>
    </interactant>
    <organismsDiffer>false</organismsDiffer>
    <experiments>3</experiments>
</comment>
<comment type="interaction">
    <interactant intactId="EBI-475646">
        <id>P07196</id>
    </interactant>
    <interactant intactId="EBI-12055755">
        <id>Q9UJW8-4</id>
        <label>ZNF180</label>
    </interactant>
    <organismsDiffer>false</organismsDiffer>
    <experiments>3</experiments>
</comment>
<comment type="interaction">
    <interactant intactId="EBI-475646">
        <id>P07196</id>
    </interactant>
    <interactant intactId="EBI-12988373">
        <id>Q9NR11-2</id>
        <label>ZNF302</label>
    </interactant>
    <organismsDiffer>false</organismsDiffer>
    <experiments>3</experiments>
</comment>
<comment type="interaction">
    <interactant intactId="EBI-475646">
        <id>P07196</id>
    </interactant>
    <interactant intactId="EBI-8489702">
        <id>Q9C0F3</id>
        <label>ZNF436</label>
    </interactant>
    <organismsDiffer>false</organismsDiffer>
    <experiments>3</experiments>
</comment>
<comment type="interaction">
    <interactant intactId="EBI-475646">
        <id>P07196</id>
    </interactant>
    <interactant intactId="EBI-25831733">
        <id>Q96MN9-2</id>
        <label>ZNF488</label>
    </interactant>
    <organismsDiffer>false</organismsDiffer>
    <experiments>3</experiments>
</comment>
<comment type="interaction">
    <interactant intactId="EBI-475646">
        <id>P07196</id>
    </interactant>
    <interactant intactId="EBI-8490788">
        <id>Q68EA5</id>
        <label>ZNF57</label>
    </interactant>
    <organismsDiffer>false</organismsDiffer>
    <experiments>3</experiments>
</comment>
<comment type="interaction">
    <interactant intactId="EBI-475646">
        <id>P07196</id>
    </interactant>
    <interactant intactId="EBI-10172590">
        <id>Q7Z3I7</id>
        <label>ZNF572</label>
    </interactant>
    <organismsDiffer>false</organismsDiffer>
    <experiments>3</experiments>
</comment>
<comment type="interaction">
    <interactant intactId="EBI-475646">
        <id>P07196</id>
    </interactant>
    <interactant intactId="EBI-12939666">
        <id>Q96N77-2</id>
        <label>ZNF641</label>
    </interactant>
    <organismsDiffer>false</organismsDiffer>
    <experiments>3</experiments>
</comment>
<comment type="interaction">
    <interactant intactId="EBI-475646">
        <id>P07196</id>
    </interactant>
    <interactant intactId="EBI-18036029">
        <id>Q3KNS6-3</id>
        <label>ZNF829</label>
    </interactant>
    <organismsDiffer>false</organismsDiffer>
    <experiments>3</experiments>
</comment>
<comment type="interaction">
    <interactant intactId="EBI-475646">
        <id>P07196</id>
    </interactant>
    <interactant intactId="EBI-751531">
        <id>O15535</id>
        <label>ZSCAN9</label>
    </interactant>
    <organismsDiffer>false</organismsDiffer>
    <experiments>3</experiments>
</comment>
<comment type="interaction">
    <interactant intactId="EBI-475646">
        <id>P07196</id>
    </interactant>
    <interactant intactId="EBI-10259496">
        <id>Q86V28</id>
    </interactant>
    <organismsDiffer>false</organismsDiffer>
    <experiments>3</experiments>
</comment>
<comment type="interaction">
    <interactant intactId="EBI-475646">
        <id>P07196</id>
    </interactant>
    <interactant intactId="EBI-9675698">
        <id>P14079</id>
        <label>tax</label>
    </interactant>
    <organismsDiffer>true</organismsDiffer>
    <experiments>4</experiments>
</comment>
<comment type="subcellular location">
    <subcellularLocation>
        <location evidence="3">Cell projection</location>
        <location evidence="3">Axon</location>
    </subcellularLocation>
    <subcellularLocation>
        <location evidence="3">Cytoplasm</location>
        <location evidence="3">Cytoskeleton</location>
    </subcellularLocation>
</comment>
<comment type="domain">
    <text>The extra mass and high charge density that distinguish the neurofilament proteins from all other intermediate filament proteins are due to the tailpiece extensions. This region may form a charged scaffolding structure suitable for interaction with other neuronal components or ions.</text>
</comment>
<comment type="PTM">
    <text evidence="1">O-glycosylated.</text>
</comment>
<comment type="PTM">
    <text evidence="18">Phosphorylated in the head and rod regions by the PKC kinase PKN1, leading to the inhibition of polymerization.</text>
</comment>
<comment type="PTM">
    <text evidence="1">Ubiquitinated in the presence of TRIM2 and UBE2D1.</text>
</comment>
<comment type="disease" evidence="10 12">
    <disease id="DI-00273">
        <name>Charcot-Marie-Tooth disease, demyelinating, type 1F</name>
        <acronym>CMT1F</acronym>
        <description>A dominant demyelinating form of Charcot-Marie-Tooth disease, a disorder of the peripheral nervous system, characterized by progressive weakness and atrophy, initially of the peroneal muscles and later of the distal muscles of the arms. Charcot-Marie-Tooth disease is classified in two main groups on the basis of electrophysiologic properties and histopathology: primary peripheral demyelinating neuropathies (designated CMT1 when they are dominantly inherited) and primary peripheral axonal neuropathies (CMT2). Demyelinating neuropathies are characterized by severely reduced nerve conduction velocities (less than 38 m/sec), segmental demyelination and remyelination with onion bulb formations on nerve biopsy, slowly progressive distal muscle atrophy and weakness, absent deep tendon reflexes, and hollow feet. CMT1F is characterized by onset in infancy or childhood (range 1 to 13 years).</description>
        <dbReference type="MIM" id="607734"/>
    </disease>
    <text>The disease is caused by variants affecting the gene represented in this entry.</text>
</comment>
<comment type="disease" evidence="7 8 9 12 13 14 15">
    <disease id="DI-00279">
        <name>Charcot-Marie-Tooth disease, axonal, type 2E</name>
        <acronym>CMT2E</acronym>
        <description>A dominant axonal form of Charcot-Marie-Tooth disease, a disorder of the peripheral nervous system, characterized by progressive weakness and atrophy, initially of the peroneal muscles and later of the distal muscles of the arms. Charcot-Marie-Tooth disease is classified in two main groups on the basis of electrophysiologic properties and histopathology: primary peripheral demyelinating neuropathies (designated CMT1 when they are dominantly inherited) and primary peripheral axonal neuropathies (CMT2). Neuropathies of the CMT2 group are characterized by signs of axonal degeneration in the absence of obvious myelin alterations, normal or slightly reduced nerve conduction velocities, and progressive distal muscle weakness and atrophy.</description>
        <dbReference type="MIM" id="607684"/>
    </disease>
    <text>The disease is caused by variants affecting the gene represented in this entry.</text>
</comment>
<comment type="disease" evidence="11 13 16 17">
    <disease id="DI-05208">
        <name>Charcot-Marie-Tooth disease, dominant intermediate G</name>
        <acronym>CMTDIG</acronym>
        <description>An autosomal dominant, intermediate form of Charcot-Marie-Tooth disease, a disorder of the peripheral nervous system, characterized by progressive weakness and atrophy, initially of the peroneal muscles and later of the distal muscles of the arms. Dominant intermediate forms are characterized by clinical and pathologic features intermediate between demyelinating and axonal peripheral neuropathies, and motor median nerve conduction velocities ranging from 25 to 45 m/sec. CMTDIG is phenotypically variable. Most affected individuals have onset in the first or second decades of slowly progressive distal motor weakness and atrophy, resulting in gait instability and distal upper limb impairment, as well as distal sensory impairment.</description>
        <dbReference type="MIM" id="617882"/>
    </disease>
    <text>The disease is caused by variants affecting the gene represented in this entry.</text>
</comment>
<comment type="miscellaneous">
    <text>NF-L is the most abundant of the three neurofilament proteins and, like the other nonepithelial intermediate filament proteins, it can form homomeric 10-nm filaments.</text>
</comment>
<comment type="similarity">
    <text evidence="5">Belongs to the intermediate filament family.</text>
</comment>
<comment type="online information" name="Inherited peripheral neuropathies mutation db">
    <link uri="https://uantwerpen.vib.be/CMTMutations"/>
</comment>
<accession>P07196</accession>
<accession>B9ZVN2</accession>
<accession>Q16154</accession>
<accession>Q8IU72</accession>
<name>NFL_HUMAN</name>
<protein>
    <recommendedName>
        <fullName>Neurofilament light polypeptide</fullName>
        <shortName>NF-L</shortName>
    </recommendedName>
    <alternativeName>
        <fullName>68 kDa neurofilament protein</fullName>
    </alternativeName>
    <alternativeName>
        <fullName>Neurofilament triplet L protein</fullName>
    </alternativeName>
</protein>
<feature type="initiator methionine" description="Removed" evidence="20">
    <location>
        <position position="1"/>
    </location>
</feature>
<feature type="chain" id="PRO_0000063787" description="Neurofilament light polypeptide">
    <location>
        <begin position="2"/>
        <end position="543"/>
    </location>
</feature>
<feature type="domain" description="IF rod" evidence="5">
    <location>
        <begin position="90"/>
        <end position="400"/>
    </location>
</feature>
<feature type="region of interest" description="Head">
    <location>
        <begin position="2"/>
        <end position="92"/>
    </location>
</feature>
<feature type="region of interest" description="Coil 1A">
    <location>
        <begin position="93"/>
        <end position="124"/>
    </location>
</feature>
<feature type="region of interest" description="Linker 1">
    <location>
        <begin position="125"/>
        <end position="137"/>
    </location>
</feature>
<feature type="region of interest" description="Coil 1B">
    <location>
        <begin position="138"/>
        <end position="234"/>
    </location>
</feature>
<feature type="region of interest" description="Linker 12">
    <location>
        <begin position="235"/>
        <end position="252"/>
    </location>
</feature>
<feature type="region of interest" description="Coil 2A">
    <location>
        <begin position="253"/>
        <end position="271"/>
    </location>
</feature>
<feature type="region of interest" description="Linker 2">
    <location>
        <begin position="272"/>
        <end position="280"/>
    </location>
</feature>
<feature type="region of interest" description="Coil 2B">
    <location>
        <begin position="281"/>
        <end position="396"/>
    </location>
</feature>
<feature type="region of interest" description="Epitope; recognized by IF-specific monoclonal antibody">
    <location>
        <begin position="381"/>
        <end position="391"/>
    </location>
</feature>
<feature type="region of interest" description="Tail">
    <location>
        <begin position="397"/>
        <end position="543"/>
    </location>
</feature>
<feature type="region of interest" description="Tail, subdomain A">
    <location>
        <begin position="397"/>
        <end position="443"/>
    </location>
</feature>
<feature type="region of interest" description="Tail, subdomain B (acidic)">
    <location>
        <begin position="444"/>
        <end position="543"/>
    </location>
</feature>
<feature type="region of interest" description="Disordered" evidence="6">
    <location>
        <begin position="462"/>
        <end position="543"/>
    </location>
</feature>
<feature type="compositionally biased region" description="Acidic residues" evidence="6">
    <location>
        <begin position="471"/>
        <end position="525"/>
    </location>
</feature>
<feature type="compositionally biased region" description="Basic and acidic residues" evidence="6">
    <location>
        <begin position="526"/>
        <end position="543"/>
    </location>
</feature>
<feature type="modified residue" description="N-acetylserine" evidence="20">
    <location>
        <position position="2"/>
    </location>
</feature>
<feature type="modified residue" description="Asymmetric dimethylarginine; alternate" evidence="3">
    <location>
        <position position="23"/>
    </location>
</feature>
<feature type="modified residue" description="Omega-N-methylarginine; alternate" evidence="3">
    <location>
        <position position="23"/>
    </location>
</feature>
<feature type="modified residue" description="Omega-N-methylarginine" evidence="3">
    <location>
        <position position="30"/>
    </location>
</feature>
<feature type="modified residue" description="Phosphotyrosine" evidence="3">
    <location>
        <position position="43"/>
    </location>
</feature>
<feature type="modified residue" description="Phosphoserine" evidence="2">
    <location>
        <position position="56"/>
    </location>
</feature>
<feature type="modified residue" description="Phosphoserine" evidence="2">
    <location>
        <position position="67"/>
    </location>
</feature>
<feature type="modified residue" description="Phosphoserine" evidence="4">
    <location>
        <position position="103"/>
    </location>
</feature>
<feature type="modified residue" description="Phosphoserine" evidence="2">
    <location>
        <position position="472"/>
    </location>
</feature>
<feature type="modified residue" description="Phosphoserine" evidence="4">
    <location>
        <position position="502"/>
    </location>
</feature>
<feature type="modified residue" description="Phosphothreonine" evidence="4">
    <location>
        <position position="520"/>
    </location>
</feature>
<feature type="glycosylation site" description="O-linked (GlcNAc) threonine" evidence="1">
    <location>
        <position position="21"/>
    </location>
</feature>
<feature type="glycosylation site" description="O-linked (GlcNAc) serine" evidence="1">
    <location>
        <position position="27"/>
    </location>
</feature>
<feature type="sequence variant" id="VAR_016017" description="In a Charcot-Marie-Tooth disease patient; dbSNP:rs57848467." evidence="10">
    <original>E</original>
    <variation>K</variation>
    <location>
        <position position="7"/>
    </location>
</feature>
<feature type="sequence variant" id="VAR_016018" description="In CMT1F; dbSNP:rs61491953." evidence="10">
    <original>P</original>
    <variation>L</variation>
    <location>
        <position position="8"/>
    </location>
</feature>
<feature type="sequence variant" id="VAR_016019" description="In CMT1F; dbSNP:rs61491953." evidence="10">
    <original>P</original>
    <variation>Q</variation>
    <location>
        <position position="8"/>
    </location>
</feature>
<feature type="sequence variant" id="VAR_016020" description="In CMT2E and CMT1F; dbSNP:rs61491953." evidence="8 10 14">
    <original>P</original>
    <variation>R</variation>
    <location>
        <position position="8"/>
    </location>
</feature>
<feature type="sequence variant" id="VAR_016021" description="In CMT2E; dbSNP:rs28928910." evidence="9 13 14">
    <original>P</original>
    <variation>S</variation>
    <location>
        <position position="22"/>
    </location>
</feature>
<feature type="sequence variant" id="VAR_016022" description="In CMT1F; dbSNP:rs58332872." evidence="10">
    <original>E</original>
    <variation>K</variation>
    <location>
        <position position="90"/>
    </location>
</feature>
<feature type="sequence variant" id="VAR_016023" description="In CMT1F and CMTDIG; dbSNP:rs58982919." evidence="10 17">
    <original>N</original>
    <variation>S</variation>
    <location>
        <position position="98"/>
    </location>
</feature>
<feature type="sequence variant" id="VAR_081565" description="In dbSNP:rs62636522." evidence="13">
    <original>I</original>
    <variation>M</variation>
    <location>
        <position position="213"/>
    </location>
</feature>
<feature type="sequence variant" id="VAR_081566" description="In CMT2E; uncertain significance; dbSNP:rs587777880." evidence="15">
    <original>Y</original>
    <variation>C</variation>
    <location>
        <position position="265"/>
    </location>
</feature>
<feature type="sequence variant" id="VAR_081567" description="In CMT2E; dbSNP:rs62636502." evidence="13 15">
    <original>L</original>
    <variation>P</variation>
    <location>
        <position position="268"/>
    </location>
</feature>
<feature type="sequence variant" id="VAR_081568" description="In CMT2E; uncertain significance." evidence="13">
    <location>
        <begin position="322"/>
        <end position="326"/>
    </location>
</feature>
<feature type="sequence variant" id="VAR_009703" description="In CMT2E; dbSNP:rs59443585." evidence="7">
    <original>Q</original>
    <variation>P</variation>
    <location>
        <position position="332"/>
    </location>
</feature>
<feature type="sequence variant" id="VAR_021613" description="In CMT2E; uncertain significance; dbSNP:rs587777881." evidence="12 15">
    <original>L</original>
    <variation>P</variation>
    <location>
        <position position="336"/>
    </location>
</feature>
<feature type="sequence variant" id="VAR_021614" description="In CMTDIG and CMT2E; dbSNP:rs62636503." evidence="11 12 13 14 16">
    <original>E</original>
    <variation>K</variation>
    <location>
        <position position="396"/>
    </location>
</feature>
<feature type="sequence variant" id="VAR_081569" description="In CMT2E; uncertain significance; dbSNP:rs587777882." evidence="15">
    <original>P</original>
    <variation>L</variation>
    <location>
        <position position="440"/>
    </location>
</feature>
<feature type="sequence variant" id="VAR_016024" description="In dbSNP:rs57153321." evidence="10 13">
    <original>D</original>
    <variation>N</variation>
    <location>
        <position position="468"/>
    </location>
</feature>
<feature type="sequence variant" id="VAR_016025" description="In CMT1F; dbSNP:rs3832558." evidence="10">
    <location>
        <position position="527"/>
    </location>
</feature>
<feature type="sequence conflict" description="In Ref. 1; CAA29097." evidence="19" ref="1">
    <location>
        <position position="28"/>
    </location>
</feature>
<feature type="sequence conflict" description="In Ref. 1." evidence="19" ref="1">
    <original>N</original>
    <variation>TN</variation>
    <location>
        <position position="155"/>
    </location>
</feature>
<feature type="sequence conflict" description="In Ref. 1; CAA29097." evidence="19" ref="1">
    <original>Q</original>
    <variation>R</variation>
    <location>
        <position position="161"/>
    </location>
</feature>
<feature type="sequence conflict" description="In Ref. 1; CAA29097." evidence="19" ref="1">
    <original>E</original>
    <variation>EE</variation>
    <location>
        <position position="165"/>
    </location>
</feature>
<feature type="sequence conflict" description="In Ref. 1; CAA29097." evidence="19" ref="1">
    <original>A</original>
    <variation>R</variation>
    <location>
        <position position="195"/>
    </location>
</feature>
<feature type="sequence conflict" description="In Ref. 1; CAA29097." evidence="19" ref="1">
    <original>I</original>
    <variation>T</variation>
    <location>
        <position position="452"/>
    </location>
</feature>
<feature type="sequence conflict" description="In Ref. 1; CAA29097." evidence="19" ref="1">
    <original>A</original>
    <variation>S</variation>
    <location>
        <position position="461"/>
    </location>
</feature>
<feature type="sequence conflict" description="In Ref. 8; AA sequence." evidence="19" ref="8">
    <original>S</original>
    <variation>D</variation>
    <location>
        <position position="472"/>
    </location>
</feature>
<keyword id="KW-0007">Acetylation</keyword>
<keyword id="KW-0966">Cell projection</keyword>
<keyword id="KW-0144">Charcot-Marie-Tooth disease</keyword>
<keyword id="KW-0175">Coiled coil</keyword>
<keyword id="KW-0963">Cytoplasm</keyword>
<keyword id="KW-0206">Cytoskeleton</keyword>
<keyword id="KW-0903">Direct protein sequencing</keyword>
<keyword id="KW-0225">Disease variant</keyword>
<keyword id="KW-0325">Glycoprotein</keyword>
<keyword id="KW-0403">Intermediate filament</keyword>
<keyword id="KW-0488">Methylation</keyword>
<keyword id="KW-0523">Neurodegeneration</keyword>
<keyword id="KW-0622">Neuropathy</keyword>
<keyword id="KW-0597">Phosphoprotein</keyword>
<keyword id="KW-1267">Proteomics identification</keyword>
<keyword id="KW-1185">Reference proteome</keyword>
<keyword id="KW-0832">Ubl conjugation</keyword>
<gene>
    <name type="primary">NEFL</name>
    <name type="synonym">NF68</name>
    <name type="synonym">NFL</name>
</gene>
<organism>
    <name type="scientific">Homo sapiens</name>
    <name type="common">Human</name>
    <dbReference type="NCBI Taxonomy" id="9606"/>
    <lineage>
        <taxon>Eukaryota</taxon>
        <taxon>Metazoa</taxon>
        <taxon>Chordata</taxon>
        <taxon>Craniata</taxon>
        <taxon>Vertebrata</taxon>
        <taxon>Euteleostomi</taxon>
        <taxon>Mammalia</taxon>
        <taxon>Eutheria</taxon>
        <taxon>Euarchontoglires</taxon>
        <taxon>Primates</taxon>
        <taxon>Haplorrhini</taxon>
        <taxon>Catarrhini</taxon>
        <taxon>Hominidae</taxon>
        <taxon>Homo</taxon>
    </lineage>
</organism>